<comment type="function">
    <text evidence="1">Located on the platform of the 30S subunit, it bridges several disparate RNA helices of the 16S rRNA. Forms part of the Shine-Dalgarno cleft in the 70S ribosome.</text>
</comment>
<comment type="subunit">
    <text evidence="1">Part of the 30S ribosomal subunit. Interacts with proteins S7 and S18. Binds to IF-3.</text>
</comment>
<comment type="similarity">
    <text evidence="1">Belongs to the universal ribosomal protein uS11 family.</text>
</comment>
<sequence length="129" mass="13630">MAKPAARPRKKVKKTVVDGIAHIHASFNNTIVTITDRQGNALSWATSGGSGFRGSRKSTPFAAQVAAERAGQAALEYGLKNLDVNVKGPGPGRESAVRALNACGYKIASITDVTPIPHNGCRPPKKRRV</sequence>
<gene>
    <name evidence="1" type="primary">rpsK</name>
    <name type="ordered locus">Avin_06480</name>
</gene>
<evidence type="ECO:0000255" key="1">
    <source>
        <dbReference type="HAMAP-Rule" id="MF_01310"/>
    </source>
</evidence>
<evidence type="ECO:0000305" key="2"/>
<reference key="1">
    <citation type="journal article" date="2009" name="J. Bacteriol.">
        <title>Genome sequence of Azotobacter vinelandii, an obligate aerobe specialized to support diverse anaerobic metabolic processes.</title>
        <authorList>
            <person name="Setubal J.C."/>
            <person name="Dos Santos P."/>
            <person name="Goldman B.S."/>
            <person name="Ertesvaag H."/>
            <person name="Espin G."/>
            <person name="Rubio L.M."/>
            <person name="Valla S."/>
            <person name="Almeida N.F."/>
            <person name="Balasubramanian D."/>
            <person name="Cromes L."/>
            <person name="Curatti L."/>
            <person name="Du Z."/>
            <person name="Godsy E."/>
            <person name="Goodner B."/>
            <person name="Hellner-Burris K."/>
            <person name="Hernandez J.A."/>
            <person name="Houmiel K."/>
            <person name="Imperial J."/>
            <person name="Kennedy C."/>
            <person name="Larson T.J."/>
            <person name="Latreille P."/>
            <person name="Ligon L.S."/>
            <person name="Lu J."/>
            <person name="Maerk M."/>
            <person name="Miller N.M."/>
            <person name="Norton S."/>
            <person name="O'Carroll I.P."/>
            <person name="Paulsen I."/>
            <person name="Raulfs E.C."/>
            <person name="Roemer R."/>
            <person name="Rosser J."/>
            <person name="Segura D."/>
            <person name="Slater S."/>
            <person name="Stricklin S.L."/>
            <person name="Studholme D.J."/>
            <person name="Sun J."/>
            <person name="Viana C.J."/>
            <person name="Wallin E."/>
            <person name="Wang B."/>
            <person name="Wheeler C."/>
            <person name="Zhu H."/>
            <person name="Dean D.R."/>
            <person name="Dixon R."/>
            <person name="Wood D."/>
        </authorList>
    </citation>
    <scope>NUCLEOTIDE SEQUENCE [LARGE SCALE GENOMIC DNA]</scope>
    <source>
        <strain>DJ / ATCC BAA-1303</strain>
    </source>
</reference>
<protein>
    <recommendedName>
        <fullName evidence="1">Small ribosomal subunit protein uS11</fullName>
    </recommendedName>
    <alternativeName>
        <fullName evidence="2">30S ribosomal protein S11</fullName>
    </alternativeName>
</protein>
<keyword id="KW-0687">Ribonucleoprotein</keyword>
<keyword id="KW-0689">Ribosomal protein</keyword>
<keyword id="KW-0694">RNA-binding</keyword>
<keyword id="KW-0699">rRNA-binding</keyword>
<name>RS11_AZOVD</name>
<organism>
    <name type="scientific">Azotobacter vinelandii (strain DJ / ATCC BAA-1303)</name>
    <dbReference type="NCBI Taxonomy" id="322710"/>
    <lineage>
        <taxon>Bacteria</taxon>
        <taxon>Pseudomonadati</taxon>
        <taxon>Pseudomonadota</taxon>
        <taxon>Gammaproteobacteria</taxon>
        <taxon>Pseudomonadales</taxon>
        <taxon>Pseudomonadaceae</taxon>
        <taxon>Azotobacter</taxon>
    </lineage>
</organism>
<proteinExistence type="inferred from homology"/>
<dbReference type="EMBL" id="CP001157">
    <property type="protein sequence ID" value="ACO76899.1"/>
    <property type="molecule type" value="Genomic_DNA"/>
</dbReference>
<dbReference type="RefSeq" id="WP_003093689.1">
    <property type="nucleotide sequence ID" value="NZ_CP144736.1"/>
</dbReference>
<dbReference type="SMR" id="C1DKN6"/>
<dbReference type="STRING" id="322710.Avin_06480"/>
<dbReference type="EnsemblBacteria" id="ACO76899">
    <property type="protein sequence ID" value="ACO76899"/>
    <property type="gene ID" value="Avin_06480"/>
</dbReference>
<dbReference type="GeneID" id="88184059"/>
<dbReference type="KEGG" id="avn:Avin_06480"/>
<dbReference type="eggNOG" id="COG0100">
    <property type="taxonomic scope" value="Bacteria"/>
</dbReference>
<dbReference type="HOGENOM" id="CLU_072439_5_0_6"/>
<dbReference type="OrthoDB" id="9806415at2"/>
<dbReference type="Proteomes" id="UP000002424">
    <property type="component" value="Chromosome"/>
</dbReference>
<dbReference type="GO" id="GO:1990904">
    <property type="term" value="C:ribonucleoprotein complex"/>
    <property type="evidence" value="ECO:0007669"/>
    <property type="project" value="UniProtKB-KW"/>
</dbReference>
<dbReference type="GO" id="GO:0005840">
    <property type="term" value="C:ribosome"/>
    <property type="evidence" value="ECO:0007669"/>
    <property type="project" value="UniProtKB-KW"/>
</dbReference>
<dbReference type="GO" id="GO:0019843">
    <property type="term" value="F:rRNA binding"/>
    <property type="evidence" value="ECO:0007669"/>
    <property type="project" value="UniProtKB-UniRule"/>
</dbReference>
<dbReference type="GO" id="GO:0003735">
    <property type="term" value="F:structural constituent of ribosome"/>
    <property type="evidence" value="ECO:0007669"/>
    <property type="project" value="InterPro"/>
</dbReference>
<dbReference type="GO" id="GO:0006412">
    <property type="term" value="P:translation"/>
    <property type="evidence" value="ECO:0007669"/>
    <property type="project" value="UniProtKB-UniRule"/>
</dbReference>
<dbReference type="FunFam" id="3.30.420.80:FF:000001">
    <property type="entry name" value="30S ribosomal protein S11"/>
    <property type="match status" value="1"/>
</dbReference>
<dbReference type="Gene3D" id="3.30.420.80">
    <property type="entry name" value="Ribosomal protein S11"/>
    <property type="match status" value="1"/>
</dbReference>
<dbReference type="HAMAP" id="MF_01310">
    <property type="entry name" value="Ribosomal_uS11"/>
    <property type="match status" value="1"/>
</dbReference>
<dbReference type="InterPro" id="IPR001971">
    <property type="entry name" value="Ribosomal_uS11"/>
</dbReference>
<dbReference type="InterPro" id="IPR019981">
    <property type="entry name" value="Ribosomal_uS11_bac-type"/>
</dbReference>
<dbReference type="InterPro" id="IPR018102">
    <property type="entry name" value="Ribosomal_uS11_CS"/>
</dbReference>
<dbReference type="InterPro" id="IPR036967">
    <property type="entry name" value="Ribosomal_uS11_sf"/>
</dbReference>
<dbReference type="NCBIfam" id="NF003698">
    <property type="entry name" value="PRK05309.1"/>
    <property type="match status" value="1"/>
</dbReference>
<dbReference type="NCBIfam" id="TIGR03632">
    <property type="entry name" value="uS11_bact"/>
    <property type="match status" value="1"/>
</dbReference>
<dbReference type="PANTHER" id="PTHR11759">
    <property type="entry name" value="40S RIBOSOMAL PROTEIN S14/30S RIBOSOMAL PROTEIN S11"/>
    <property type="match status" value="1"/>
</dbReference>
<dbReference type="Pfam" id="PF00411">
    <property type="entry name" value="Ribosomal_S11"/>
    <property type="match status" value="1"/>
</dbReference>
<dbReference type="PIRSF" id="PIRSF002131">
    <property type="entry name" value="Ribosomal_S11"/>
    <property type="match status" value="1"/>
</dbReference>
<dbReference type="SUPFAM" id="SSF53137">
    <property type="entry name" value="Translational machinery components"/>
    <property type="match status" value="1"/>
</dbReference>
<dbReference type="PROSITE" id="PS00054">
    <property type="entry name" value="RIBOSOMAL_S11"/>
    <property type="match status" value="1"/>
</dbReference>
<accession>C1DKN6</accession>
<feature type="chain" id="PRO_1000214353" description="Small ribosomal subunit protein uS11">
    <location>
        <begin position="1"/>
        <end position="129"/>
    </location>
</feature>